<sequence length="510" mass="53712">MSHLVLTPGTLTLAQIREISRGKVTLELAESAIADINTSAGLVQQVLDEGRTVYGINTGFGLLANTKIAADDLQLLQRSIVLSHAAGTGQYMQDATVRLMMVLKINSLSRGFSGIRLEVINFLIALVNAGVYPCVPEKGSVGASGDLAPLSHMCLPLLGEGEMSYQGQLISAAEGLEIAGLKPIELAAKEGLALLNGTQASTALALEGLFNAEDLFAASSVIGAMSVEAAMGSRSPFDPRIHAARGQKGQIDSAAVFRHLLGGESEISLDHVNCEKVQDPYSLRCQPQVLGACLTQIRHAAEVLGTEANGVTDNPLVFQDTGDIISGGNFHAEPVAMAADNLAIAIAELGSIAERRIALLIDSNLSKLPPFLVENGGVNSGFMIAQVTAAALASENKTYAHPASVDSLPTSANQEDHVSMATFAARRLRDMSENTRGVLAVELLAAAQGLDFRAPLQPSKAVAQAKGELRELVSYYDKDRFFGPDIEAATDLLLTASYNAYLPAEILPSL</sequence>
<accession>A8HA91</accession>
<dbReference type="EC" id="4.3.1.3" evidence="1"/>
<dbReference type="EMBL" id="CP000851">
    <property type="protein sequence ID" value="ABV89478.1"/>
    <property type="molecule type" value="Genomic_DNA"/>
</dbReference>
<dbReference type="RefSeq" id="WP_012157356.1">
    <property type="nucleotide sequence ID" value="NC_009901.1"/>
</dbReference>
<dbReference type="SMR" id="A8HA91"/>
<dbReference type="STRING" id="398579.Spea_4168"/>
<dbReference type="KEGG" id="spl:Spea_4168"/>
<dbReference type="eggNOG" id="COG2986">
    <property type="taxonomic scope" value="Bacteria"/>
</dbReference>
<dbReference type="HOGENOM" id="CLU_014801_4_0_6"/>
<dbReference type="OrthoDB" id="9806955at2"/>
<dbReference type="UniPathway" id="UPA00379">
    <property type="reaction ID" value="UER00549"/>
</dbReference>
<dbReference type="Proteomes" id="UP000002608">
    <property type="component" value="Chromosome"/>
</dbReference>
<dbReference type="GO" id="GO:0005737">
    <property type="term" value="C:cytoplasm"/>
    <property type="evidence" value="ECO:0007669"/>
    <property type="project" value="UniProtKB-SubCell"/>
</dbReference>
<dbReference type="GO" id="GO:0004397">
    <property type="term" value="F:histidine ammonia-lyase activity"/>
    <property type="evidence" value="ECO:0007669"/>
    <property type="project" value="UniProtKB-UniRule"/>
</dbReference>
<dbReference type="GO" id="GO:0019556">
    <property type="term" value="P:L-histidine catabolic process to glutamate and formamide"/>
    <property type="evidence" value="ECO:0007669"/>
    <property type="project" value="UniProtKB-UniPathway"/>
</dbReference>
<dbReference type="GO" id="GO:0019557">
    <property type="term" value="P:L-histidine catabolic process to glutamate and formate"/>
    <property type="evidence" value="ECO:0007669"/>
    <property type="project" value="UniProtKB-UniPathway"/>
</dbReference>
<dbReference type="CDD" id="cd00332">
    <property type="entry name" value="PAL-HAL"/>
    <property type="match status" value="1"/>
</dbReference>
<dbReference type="FunFam" id="1.10.275.10:FF:000005">
    <property type="entry name" value="Histidine ammonia-lyase"/>
    <property type="match status" value="1"/>
</dbReference>
<dbReference type="FunFam" id="1.20.200.10:FF:000003">
    <property type="entry name" value="Histidine ammonia-lyase"/>
    <property type="match status" value="1"/>
</dbReference>
<dbReference type="Gene3D" id="1.20.200.10">
    <property type="entry name" value="Fumarase/aspartase (Central domain)"/>
    <property type="match status" value="1"/>
</dbReference>
<dbReference type="Gene3D" id="1.10.275.10">
    <property type="entry name" value="Fumarase/aspartase (N-terminal domain)"/>
    <property type="match status" value="1"/>
</dbReference>
<dbReference type="HAMAP" id="MF_00229">
    <property type="entry name" value="His_ammonia_lyase"/>
    <property type="match status" value="1"/>
</dbReference>
<dbReference type="InterPro" id="IPR001106">
    <property type="entry name" value="Aromatic_Lyase"/>
</dbReference>
<dbReference type="InterPro" id="IPR024083">
    <property type="entry name" value="Fumarase/histidase_N"/>
</dbReference>
<dbReference type="InterPro" id="IPR005921">
    <property type="entry name" value="HutH"/>
</dbReference>
<dbReference type="InterPro" id="IPR008948">
    <property type="entry name" value="L-Aspartase-like"/>
</dbReference>
<dbReference type="InterPro" id="IPR022313">
    <property type="entry name" value="Phe/His_NH3-lyase_AS"/>
</dbReference>
<dbReference type="NCBIfam" id="TIGR01225">
    <property type="entry name" value="hutH"/>
    <property type="match status" value="1"/>
</dbReference>
<dbReference type="NCBIfam" id="NF006871">
    <property type="entry name" value="PRK09367.1"/>
    <property type="match status" value="1"/>
</dbReference>
<dbReference type="PANTHER" id="PTHR10362">
    <property type="entry name" value="HISTIDINE AMMONIA-LYASE"/>
    <property type="match status" value="1"/>
</dbReference>
<dbReference type="Pfam" id="PF00221">
    <property type="entry name" value="Lyase_aromatic"/>
    <property type="match status" value="1"/>
</dbReference>
<dbReference type="SUPFAM" id="SSF48557">
    <property type="entry name" value="L-aspartase-like"/>
    <property type="match status" value="1"/>
</dbReference>
<dbReference type="PROSITE" id="PS00488">
    <property type="entry name" value="PAL_HISTIDASE"/>
    <property type="match status" value="1"/>
</dbReference>
<feature type="chain" id="PRO_1000078229" description="Histidine ammonia-lyase">
    <location>
        <begin position="1"/>
        <end position="510"/>
    </location>
</feature>
<feature type="modified residue" description="2,3-didehydroalanine (Ser)" evidence="1">
    <location>
        <position position="144"/>
    </location>
</feature>
<feature type="cross-link" description="5-imidazolinone (Ala-Gly)" evidence="1">
    <location>
        <begin position="143"/>
        <end position="145"/>
    </location>
</feature>
<comment type="catalytic activity">
    <reaction evidence="1">
        <text>L-histidine = trans-urocanate + NH4(+)</text>
        <dbReference type="Rhea" id="RHEA:21232"/>
        <dbReference type="ChEBI" id="CHEBI:17771"/>
        <dbReference type="ChEBI" id="CHEBI:28938"/>
        <dbReference type="ChEBI" id="CHEBI:57595"/>
        <dbReference type="EC" id="4.3.1.3"/>
    </reaction>
</comment>
<comment type="pathway">
    <text evidence="1">Amino-acid degradation; L-histidine degradation into L-glutamate; N-formimidoyl-L-glutamate from L-histidine: step 1/3.</text>
</comment>
<comment type="subcellular location">
    <subcellularLocation>
        <location evidence="1">Cytoplasm</location>
    </subcellularLocation>
</comment>
<comment type="PTM">
    <text evidence="1">Contains an active site 4-methylidene-imidazol-5-one (MIO), which is formed autocatalytically by cyclization and dehydration of residues Ala-Ser-Gly.</text>
</comment>
<comment type="similarity">
    <text evidence="1">Belongs to the PAL/histidase family.</text>
</comment>
<organism>
    <name type="scientific">Shewanella pealeana (strain ATCC 700345 / ANG-SQ1)</name>
    <dbReference type="NCBI Taxonomy" id="398579"/>
    <lineage>
        <taxon>Bacteria</taxon>
        <taxon>Pseudomonadati</taxon>
        <taxon>Pseudomonadota</taxon>
        <taxon>Gammaproteobacteria</taxon>
        <taxon>Alteromonadales</taxon>
        <taxon>Shewanellaceae</taxon>
        <taxon>Shewanella</taxon>
    </lineage>
</organism>
<evidence type="ECO:0000255" key="1">
    <source>
        <dbReference type="HAMAP-Rule" id="MF_00229"/>
    </source>
</evidence>
<keyword id="KW-0963">Cytoplasm</keyword>
<keyword id="KW-0369">Histidine metabolism</keyword>
<keyword id="KW-0456">Lyase</keyword>
<keyword id="KW-1185">Reference proteome</keyword>
<gene>
    <name evidence="1" type="primary">hutH</name>
    <name type="ordered locus">Spea_4168</name>
</gene>
<protein>
    <recommendedName>
        <fullName evidence="1">Histidine ammonia-lyase</fullName>
        <shortName evidence="1">Histidase</shortName>
        <ecNumber evidence="1">4.3.1.3</ecNumber>
    </recommendedName>
</protein>
<reference key="1">
    <citation type="submission" date="2007-10" db="EMBL/GenBank/DDBJ databases">
        <title>Complete sequence of Shewanella pealeana ATCC 700345.</title>
        <authorList>
            <consortium name="US DOE Joint Genome Institute"/>
            <person name="Copeland A."/>
            <person name="Lucas S."/>
            <person name="Lapidus A."/>
            <person name="Barry K."/>
            <person name="Glavina del Rio T."/>
            <person name="Dalin E."/>
            <person name="Tice H."/>
            <person name="Pitluck S."/>
            <person name="Chertkov O."/>
            <person name="Brettin T."/>
            <person name="Bruce D."/>
            <person name="Detter J.C."/>
            <person name="Han C."/>
            <person name="Schmutz J."/>
            <person name="Larimer F."/>
            <person name="Land M."/>
            <person name="Hauser L."/>
            <person name="Kyrpides N."/>
            <person name="Kim E."/>
            <person name="Zhao J.-S.Z."/>
            <person name="Manno D."/>
            <person name="Hawari J."/>
            <person name="Richardson P."/>
        </authorList>
    </citation>
    <scope>NUCLEOTIDE SEQUENCE [LARGE SCALE GENOMIC DNA]</scope>
    <source>
        <strain>ATCC 700345 / ANG-SQ1</strain>
    </source>
</reference>
<name>HUTH_SHEPA</name>
<proteinExistence type="inferred from homology"/>